<sequence>MAIKLEDKKAIVAEVNEAAKAALSAVVADARGVTVGAMTGLRKEAREAGVYVKVVRNTLLKRAVEGTQFDVLNDVFKGPTLIAFSNEHPGAAARIFREFAKGQDKFEIKAAAFEGQFLAANQIDVLASLPTYDEAVSQLMSVIQGATSKLARTLAAIRDQKEAAAA</sequence>
<comment type="function">
    <text evidence="1">Forms part of the ribosomal stalk, playing a central role in the interaction of the ribosome with GTP-bound translation factors.</text>
</comment>
<comment type="subunit">
    <text evidence="1">Part of the ribosomal stalk of the 50S ribosomal subunit. The N-terminus interacts with L11 and the large rRNA to form the base of the stalk. The C-terminus forms an elongated spine to which L12 dimers bind in a sequential fashion forming a multimeric L10(L12)X complex.</text>
</comment>
<comment type="similarity">
    <text evidence="1">Belongs to the universal ribosomal protein uL10 family.</text>
</comment>
<reference key="1">
    <citation type="submission" date="2007-06" db="EMBL/GenBank/DDBJ databases">
        <authorList>
            <person name="Dodson R.J."/>
            <person name="Harkins D."/>
            <person name="Paulsen I.T."/>
        </authorList>
    </citation>
    <scope>NUCLEOTIDE SEQUENCE [LARGE SCALE GENOMIC DNA]</scope>
    <source>
        <strain>DSM 24068 / PA7</strain>
    </source>
</reference>
<feature type="chain" id="PRO_1000005561" description="Large ribosomal subunit protein uL10">
    <location>
        <begin position="1"/>
        <end position="166"/>
    </location>
</feature>
<dbReference type="EMBL" id="CP000744">
    <property type="protein sequence ID" value="ABR84259.1"/>
    <property type="molecule type" value="Genomic_DNA"/>
</dbReference>
<dbReference type="RefSeq" id="WP_003093748.1">
    <property type="nucleotide sequence ID" value="NC_009656.1"/>
</dbReference>
<dbReference type="SMR" id="A6UZH9"/>
<dbReference type="GeneID" id="77219189"/>
<dbReference type="KEGG" id="pap:PSPA7_0828"/>
<dbReference type="HOGENOM" id="CLU_092227_0_2_6"/>
<dbReference type="Proteomes" id="UP000001582">
    <property type="component" value="Chromosome"/>
</dbReference>
<dbReference type="GO" id="GO:0015934">
    <property type="term" value="C:large ribosomal subunit"/>
    <property type="evidence" value="ECO:0007669"/>
    <property type="project" value="InterPro"/>
</dbReference>
<dbReference type="GO" id="GO:0070180">
    <property type="term" value="F:large ribosomal subunit rRNA binding"/>
    <property type="evidence" value="ECO:0007669"/>
    <property type="project" value="UniProtKB-UniRule"/>
</dbReference>
<dbReference type="GO" id="GO:0003735">
    <property type="term" value="F:structural constituent of ribosome"/>
    <property type="evidence" value="ECO:0007669"/>
    <property type="project" value="InterPro"/>
</dbReference>
<dbReference type="GO" id="GO:0006412">
    <property type="term" value="P:translation"/>
    <property type="evidence" value="ECO:0007669"/>
    <property type="project" value="UniProtKB-UniRule"/>
</dbReference>
<dbReference type="CDD" id="cd05797">
    <property type="entry name" value="Ribosomal_L10"/>
    <property type="match status" value="1"/>
</dbReference>
<dbReference type="FunFam" id="3.30.70.1730:FF:000001">
    <property type="entry name" value="50S ribosomal protein L10"/>
    <property type="match status" value="1"/>
</dbReference>
<dbReference type="Gene3D" id="3.30.70.1730">
    <property type="match status" value="1"/>
</dbReference>
<dbReference type="Gene3D" id="6.10.250.2350">
    <property type="match status" value="1"/>
</dbReference>
<dbReference type="HAMAP" id="MF_00362">
    <property type="entry name" value="Ribosomal_uL10"/>
    <property type="match status" value="1"/>
</dbReference>
<dbReference type="InterPro" id="IPR001790">
    <property type="entry name" value="Ribosomal_uL10"/>
</dbReference>
<dbReference type="InterPro" id="IPR043141">
    <property type="entry name" value="Ribosomal_uL10-like_sf"/>
</dbReference>
<dbReference type="InterPro" id="IPR022973">
    <property type="entry name" value="Ribosomal_uL10_bac"/>
</dbReference>
<dbReference type="InterPro" id="IPR047865">
    <property type="entry name" value="Ribosomal_uL10_bac_type"/>
</dbReference>
<dbReference type="InterPro" id="IPR002363">
    <property type="entry name" value="Ribosomal_uL10_CS_bac"/>
</dbReference>
<dbReference type="NCBIfam" id="NF000955">
    <property type="entry name" value="PRK00099.1-1"/>
    <property type="match status" value="1"/>
</dbReference>
<dbReference type="PANTHER" id="PTHR11560">
    <property type="entry name" value="39S RIBOSOMAL PROTEIN L10, MITOCHONDRIAL"/>
    <property type="match status" value="1"/>
</dbReference>
<dbReference type="Pfam" id="PF00466">
    <property type="entry name" value="Ribosomal_L10"/>
    <property type="match status" value="1"/>
</dbReference>
<dbReference type="SUPFAM" id="SSF160369">
    <property type="entry name" value="Ribosomal protein L10-like"/>
    <property type="match status" value="1"/>
</dbReference>
<dbReference type="PROSITE" id="PS01109">
    <property type="entry name" value="RIBOSOMAL_L10"/>
    <property type="match status" value="1"/>
</dbReference>
<accession>A6UZH9</accession>
<evidence type="ECO:0000255" key="1">
    <source>
        <dbReference type="HAMAP-Rule" id="MF_00362"/>
    </source>
</evidence>
<evidence type="ECO:0000305" key="2"/>
<protein>
    <recommendedName>
        <fullName evidence="1">Large ribosomal subunit protein uL10</fullName>
    </recommendedName>
    <alternativeName>
        <fullName evidence="2">50S ribosomal protein L10</fullName>
    </alternativeName>
</protein>
<name>RL10_PSEP7</name>
<gene>
    <name evidence="1" type="primary">rplJ</name>
    <name type="ordered locus">PSPA7_0828</name>
</gene>
<keyword id="KW-0687">Ribonucleoprotein</keyword>
<keyword id="KW-0689">Ribosomal protein</keyword>
<keyword id="KW-0694">RNA-binding</keyword>
<keyword id="KW-0699">rRNA-binding</keyword>
<proteinExistence type="inferred from homology"/>
<organism>
    <name type="scientific">Pseudomonas paraeruginosa (strain DSM 24068 / PA7)</name>
    <name type="common">Pseudomonas aeruginosa (strain PA7)</name>
    <dbReference type="NCBI Taxonomy" id="381754"/>
    <lineage>
        <taxon>Bacteria</taxon>
        <taxon>Pseudomonadati</taxon>
        <taxon>Pseudomonadota</taxon>
        <taxon>Gammaproteobacteria</taxon>
        <taxon>Pseudomonadales</taxon>
        <taxon>Pseudomonadaceae</taxon>
        <taxon>Pseudomonas</taxon>
        <taxon>Pseudomonas paraeruginosa</taxon>
    </lineage>
</organism>